<keyword id="KW-0028">Amino-acid biosynthesis</keyword>
<keyword id="KW-0198">Cysteine biosynthesis</keyword>
<keyword id="KW-0249">Electron transport</keyword>
<keyword id="KW-0274">FAD</keyword>
<keyword id="KW-0285">Flavoprotein</keyword>
<keyword id="KW-0288">FMN</keyword>
<keyword id="KW-0521">NADP</keyword>
<keyword id="KW-0560">Oxidoreductase</keyword>
<keyword id="KW-0813">Transport</keyword>
<protein>
    <recommendedName>
        <fullName evidence="1">Sulfite reductase [NADPH] flavoprotein alpha-component</fullName>
        <shortName evidence="1">SiR-FP</shortName>
        <ecNumber evidence="1">1.8.1.2</ecNumber>
    </recommendedName>
</protein>
<gene>
    <name evidence="1" type="primary">cysJ</name>
    <name type="ordered locus">KPN78578_30590</name>
    <name type="ORF">KPN_03119</name>
</gene>
<evidence type="ECO:0000255" key="1">
    <source>
        <dbReference type="HAMAP-Rule" id="MF_01541"/>
    </source>
</evidence>
<proteinExistence type="inferred from homology"/>
<dbReference type="EC" id="1.8.1.2" evidence="1"/>
<dbReference type="EMBL" id="CP000647">
    <property type="protein sequence ID" value="ABR78520.1"/>
    <property type="molecule type" value="Genomic_DNA"/>
</dbReference>
<dbReference type="RefSeq" id="WP_004151065.1">
    <property type="nucleotide sequence ID" value="NC_009648.1"/>
</dbReference>
<dbReference type="SMR" id="A6TD49"/>
<dbReference type="STRING" id="272620.KPN_03119"/>
<dbReference type="PaxDb" id="272620-KPN_03119"/>
<dbReference type="EnsemblBacteria" id="ABR78520">
    <property type="protein sequence ID" value="ABR78520"/>
    <property type="gene ID" value="KPN_03119"/>
</dbReference>
<dbReference type="KEGG" id="kpn:KPN_03119"/>
<dbReference type="HOGENOM" id="CLU_001570_17_7_6"/>
<dbReference type="UniPathway" id="UPA00140">
    <property type="reaction ID" value="UER00207"/>
</dbReference>
<dbReference type="Proteomes" id="UP000000265">
    <property type="component" value="Chromosome"/>
</dbReference>
<dbReference type="GO" id="GO:0005829">
    <property type="term" value="C:cytosol"/>
    <property type="evidence" value="ECO:0007669"/>
    <property type="project" value="TreeGrafter"/>
</dbReference>
<dbReference type="GO" id="GO:0050660">
    <property type="term" value="F:flavin adenine dinucleotide binding"/>
    <property type="evidence" value="ECO:0007669"/>
    <property type="project" value="InterPro"/>
</dbReference>
<dbReference type="GO" id="GO:0010181">
    <property type="term" value="F:FMN binding"/>
    <property type="evidence" value="ECO:0007669"/>
    <property type="project" value="InterPro"/>
</dbReference>
<dbReference type="GO" id="GO:0004783">
    <property type="term" value="F:sulfite reductase (NADPH) activity"/>
    <property type="evidence" value="ECO:0007669"/>
    <property type="project" value="UniProtKB-UniRule"/>
</dbReference>
<dbReference type="GO" id="GO:0019344">
    <property type="term" value="P:cysteine biosynthetic process"/>
    <property type="evidence" value="ECO:0007669"/>
    <property type="project" value="UniProtKB-KW"/>
</dbReference>
<dbReference type="GO" id="GO:0070814">
    <property type="term" value="P:hydrogen sulfide biosynthetic process"/>
    <property type="evidence" value="ECO:0007669"/>
    <property type="project" value="UniProtKB-UniRule"/>
</dbReference>
<dbReference type="GO" id="GO:0000103">
    <property type="term" value="P:sulfate assimilation"/>
    <property type="evidence" value="ECO:0007669"/>
    <property type="project" value="UniProtKB-UniRule"/>
</dbReference>
<dbReference type="CDD" id="cd06199">
    <property type="entry name" value="SiR"/>
    <property type="match status" value="1"/>
</dbReference>
<dbReference type="FunFam" id="3.40.50.80:FF:000001">
    <property type="entry name" value="NADPH--cytochrome P450 reductase 1"/>
    <property type="match status" value="1"/>
</dbReference>
<dbReference type="FunFam" id="1.20.990.10:FF:000004">
    <property type="entry name" value="Sulfite reductase [NADPH] flavoprotein alpha-component"/>
    <property type="match status" value="1"/>
</dbReference>
<dbReference type="FunFam" id="3.40.50.360:FF:000018">
    <property type="entry name" value="Sulfite reductase [NADPH] flavoprotein alpha-component"/>
    <property type="match status" value="1"/>
</dbReference>
<dbReference type="Gene3D" id="3.40.50.360">
    <property type="match status" value="1"/>
</dbReference>
<dbReference type="Gene3D" id="1.20.990.10">
    <property type="entry name" value="NADPH-cytochrome p450 Reductase, Chain A, domain 3"/>
    <property type="match status" value="1"/>
</dbReference>
<dbReference type="Gene3D" id="3.40.50.80">
    <property type="entry name" value="Nucleotide-binding domain of ferredoxin-NADP reductase (FNR) module"/>
    <property type="match status" value="1"/>
</dbReference>
<dbReference type="Gene3D" id="2.40.30.10">
    <property type="entry name" value="Translation factors"/>
    <property type="match status" value="1"/>
</dbReference>
<dbReference type="HAMAP" id="MF_01541">
    <property type="entry name" value="CysJ"/>
    <property type="match status" value="1"/>
</dbReference>
<dbReference type="InterPro" id="IPR010199">
    <property type="entry name" value="CysJ"/>
</dbReference>
<dbReference type="InterPro" id="IPR003097">
    <property type="entry name" value="CysJ-like_FAD-binding"/>
</dbReference>
<dbReference type="InterPro" id="IPR029758">
    <property type="entry name" value="CysJ_Proteobact"/>
</dbReference>
<dbReference type="InterPro" id="IPR017927">
    <property type="entry name" value="FAD-bd_FR_type"/>
</dbReference>
<dbReference type="InterPro" id="IPR001094">
    <property type="entry name" value="Flavdoxin-like"/>
</dbReference>
<dbReference type="InterPro" id="IPR008254">
    <property type="entry name" value="Flavodoxin/NO_synth"/>
</dbReference>
<dbReference type="InterPro" id="IPR001709">
    <property type="entry name" value="Flavoprot_Pyr_Nucl_cyt_Rdtase"/>
</dbReference>
<dbReference type="InterPro" id="IPR029039">
    <property type="entry name" value="Flavoprotein-like_sf"/>
</dbReference>
<dbReference type="InterPro" id="IPR039261">
    <property type="entry name" value="FNR_nucleotide-bd"/>
</dbReference>
<dbReference type="InterPro" id="IPR023173">
    <property type="entry name" value="NADPH_Cyt_P450_Rdtase_alpha"/>
</dbReference>
<dbReference type="InterPro" id="IPR001433">
    <property type="entry name" value="OxRdtase_FAD/NAD-bd"/>
</dbReference>
<dbReference type="InterPro" id="IPR017938">
    <property type="entry name" value="Riboflavin_synthase-like_b-brl"/>
</dbReference>
<dbReference type="NCBIfam" id="TIGR01931">
    <property type="entry name" value="cysJ"/>
    <property type="match status" value="1"/>
</dbReference>
<dbReference type="NCBIfam" id="NF004859">
    <property type="entry name" value="PRK06214.1"/>
    <property type="match status" value="1"/>
</dbReference>
<dbReference type="NCBIfam" id="NF008197">
    <property type="entry name" value="PRK10953.1"/>
    <property type="match status" value="1"/>
</dbReference>
<dbReference type="PANTHER" id="PTHR19384:SF128">
    <property type="entry name" value="NADPH OXIDOREDUCTASE A"/>
    <property type="match status" value="1"/>
</dbReference>
<dbReference type="PANTHER" id="PTHR19384">
    <property type="entry name" value="NITRIC OXIDE SYNTHASE-RELATED"/>
    <property type="match status" value="1"/>
</dbReference>
<dbReference type="Pfam" id="PF00667">
    <property type="entry name" value="FAD_binding_1"/>
    <property type="match status" value="1"/>
</dbReference>
<dbReference type="Pfam" id="PF00258">
    <property type="entry name" value="Flavodoxin_1"/>
    <property type="match status" value="1"/>
</dbReference>
<dbReference type="Pfam" id="PF00175">
    <property type="entry name" value="NAD_binding_1"/>
    <property type="match status" value="1"/>
</dbReference>
<dbReference type="PIRSF" id="PIRSF000207">
    <property type="entry name" value="SiR-FP_CysJ"/>
    <property type="match status" value="1"/>
</dbReference>
<dbReference type="PRINTS" id="PR00369">
    <property type="entry name" value="FLAVODOXIN"/>
</dbReference>
<dbReference type="PRINTS" id="PR00371">
    <property type="entry name" value="FPNCR"/>
</dbReference>
<dbReference type="SUPFAM" id="SSF52343">
    <property type="entry name" value="Ferredoxin reductase-like, C-terminal NADP-linked domain"/>
    <property type="match status" value="1"/>
</dbReference>
<dbReference type="SUPFAM" id="SSF52218">
    <property type="entry name" value="Flavoproteins"/>
    <property type="match status" value="1"/>
</dbReference>
<dbReference type="SUPFAM" id="SSF63380">
    <property type="entry name" value="Riboflavin synthase domain-like"/>
    <property type="match status" value="1"/>
</dbReference>
<dbReference type="PROSITE" id="PS51384">
    <property type="entry name" value="FAD_FR"/>
    <property type="match status" value="1"/>
</dbReference>
<dbReference type="PROSITE" id="PS50902">
    <property type="entry name" value="FLAVODOXIN_LIKE"/>
    <property type="match status" value="1"/>
</dbReference>
<accession>A6TD49</accession>
<organism>
    <name type="scientific">Klebsiella pneumoniae subsp. pneumoniae (strain ATCC 700721 / MGH 78578)</name>
    <dbReference type="NCBI Taxonomy" id="272620"/>
    <lineage>
        <taxon>Bacteria</taxon>
        <taxon>Pseudomonadati</taxon>
        <taxon>Pseudomonadota</taxon>
        <taxon>Gammaproteobacteria</taxon>
        <taxon>Enterobacterales</taxon>
        <taxon>Enterobacteriaceae</taxon>
        <taxon>Klebsiella/Raoultella group</taxon>
        <taxon>Klebsiella</taxon>
        <taxon>Klebsiella pneumoniae complex</taxon>
    </lineage>
</organism>
<sequence length="599" mass="66019">MTTQAPPSNLLPLNPEQLARLQAATTDFTPTQLAWVSGYFWGVLNQQSGAAVAAPAPAAEVPTITLISASQTGNARRVAEALRDDLLAAKLNVKLVNAGDYKFKQIAAEKLLVVVTSTQGEGEPPEEAVALHKFLFSKKAPKLDGTAFAVFGLGDTSYEFFCQSGKDFDNKLAELGAERLLDRVDADVEYQAAAAEWRARVVEALKARAPVAAPAQLATSGAVNDIHTSPYTKEAPLTATLSVNQKITGRNSEKDVRHIEIDLGDSGLRYQPGDALGVWYQNDPQLVKELVELLWLKGDEPVTVEGKTLPLSEALQWHFELTVNTATIVENYATLTRSESLLPLVGDKAQLQQYAAATPIVDMVRFSPAQLDAEALIGLLRPLTPRLYSIASSQAEVESEVHVTVGVVRYEIEGRARAGGASSFLADRVEEDGEVRVFIEHNDNFRLPANPETPVIMIGPGTGIAPFRAFMQQRAADGAQGKNWLFFGNPHFTEDFLYQVEWQSYVKEGLLTRIDLAWSRDQQQKIYVQDKLREQGAELWRWINDGAHIYVCGDANRMAKDVENTLLEVIAEYGAMDAEAADEFLSELRVERRYQRDVY</sequence>
<name>CYSJ_KLEP7</name>
<reference key="1">
    <citation type="submission" date="2006-09" db="EMBL/GenBank/DDBJ databases">
        <authorList>
            <consortium name="The Klebsiella pneumonia Genome Sequencing Project"/>
            <person name="McClelland M."/>
            <person name="Sanderson E.K."/>
            <person name="Spieth J."/>
            <person name="Clifton W.S."/>
            <person name="Latreille P."/>
            <person name="Sabo A."/>
            <person name="Pepin K."/>
            <person name="Bhonagiri V."/>
            <person name="Porwollik S."/>
            <person name="Ali J."/>
            <person name="Wilson R.K."/>
        </authorList>
    </citation>
    <scope>NUCLEOTIDE SEQUENCE [LARGE SCALE GENOMIC DNA]</scope>
    <source>
        <strain>ATCC 700721 / MGH 78578</strain>
    </source>
</reference>
<feature type="chain" id="PRO_1000087637" description="Sulfite reductase [NADPH] flavoprotein alpha-component">
    <location>
        <begin position="1"/>
        <end position="599"/>
    </location>
</feature>
<feature type="domain" description="Flavodoxin-like" evidence="1">
    <location>
        <begin position="64"/>
        <end position="202"/>
    </location>
</feature>
<feature type="domain" description="FAD-binding FR-type" evidence="1">
    <location>
        <begin position="234"/>
        <end position="448"/>
    </location>
</feature>
<feature type="binding site" evidence="1">
    <location>
        <begin position="70"/>
        <end position="75"/>
    </location>
    <ligand>
        <name>FMN</name>
        <dbReference type="ChEBI" id="CHEBI:58210"/>
    </ligand>
</feature>
<feature type="binding site" evidence="1">
    <location>
        <begin position="117"/>
        <end position="120"/>
    </location>
    <ligand>
        <name>FMN</name>
        <dbReference type="ChEBI" id="CHEBI:58210"/>
    </ligand>
</feature>
<feature type="binding site" evidence="1">
    <location>
        <begin position="153"/>
        <end position="162"/>
    </location>
    <ligand>
        <name>FMN</name>
        <dbReference type="ChEBI" id="CHEBI:58210"/>
    </ligand>
</feature>
<feature type="binding site" evidence="1">
    <location>
        <position position="322"/>
    </location>
    <ligand>
        <name>FAD</name>
        <dbReference type="ChEBI" id="CHEBI:57692"/>
    </ligand>
</feature>
<feature type="binding site" evidence="1">
    <location>
        <position position="356"/>
    </location>
    <ligand>
        <name>FAD</name>
        <dbReference type="ChEBI" id="CHEBI:57692"/>
    </ligand>
</feature>
<feature type="binding site" evidence="1">
    <location>
        <begin position="386"/>
        <end position="389"/>
    </location>
    <ligand>
        <name>FAD</name>
        <dbReference type="ChEBI" id="CHEBI:57692"/>
    </ligand>
</feature>
<feature type="binding site" evidence="1">
    <location>
        <begin position="404"/>
        <end position="406"/>
    </location>
    <ligand>
        <name>FAD</name>
        <dbReference type="ChEBI" id="CHEBI:57692"/>
    </ligand>
</feature>
<feature type="binding site" evidence="1">
    <location>
        <position position="410"/>
    </location>
    <ligand>
        <name>FAD</name>
        <dbReference type="ChEBI" id="CHEBI:57692"/>
    </ligand>
</feature>
<feature type="binding site" evidence="1">
    <location>
        <begin position="419"/>
        <end position="422"/>
    </location>
    <ligand>
        <name>FAD</name>
        <dbReference type="ChEBI" id="CHEBI:57692"/>
    </ligand>
</feature>
<feature type="binding site" evidence="1">
    <location>
        <begin position="519"/>
        <end position="520"/>
    </location>
    <ligand>
        <name>NADP(+)</name>
        <dbReference type="ChEBI" id="CHEBI:58349"/>
    </ligand>
</feature>
<feature type="binding site" evidence="1">
    <location>
        <begin position="525"/>
        <end position="529"/>
    </location>
    <ligand>
        <name>NADP(+)</name>
        <dbReference type="ChEBI" id="CHEBI:58349"/>
    </ligand>
</feature>
<feature type="binding site" evidence="1">
    <location>
        <position position="561"/>
    </location>
    <ligand>
        <name>NADP(+)</name>
        <dbReference type="ChEBI" id="CHEBI:58349"/>
    </ligand>
</feature>
<feature type="binding site" evidence="1">
    <location>
        <position position="599"/>
    </location>
    <ligand>
        <name>FAD</name>
        <dbReference type="ChEBI" id="CHEBI:57692"/>
    </ligand>
</feature>
<comment type="function">
    <text evidence="1">Component of the sulfite reductase complex that catalyzes the 6-electron reduction of sulfite to sulfide. This is one of several activities required for the biosynthesis of L-cysteine from sulfate. The flavoprotein component catalyzes the electron flow from NADPH -&gt; FAD -&gt; FMN to the hemoprotein component.</text>
</comment>
<comment type="catalytic activity">
    <reaction evidence="1">
        <text>hydrogen sulfide + 3 NADP(+) + 3 H2O = sulfite + 3 NADPH + 4 H(+)</text>
        <dbReference type="Rhea" id="RHEA:13801"/>
        <dbReference type="ChEBI" id="CHEBI:15377"/>
        <dbReference type="ChEBI" id="CHEBI:15378"/>
        <dbReference type="ChEBI" id="CHEBI:17359"/>
        <dbReference type="ChEBI" id="CHEBI:29919"/>
        <dbReference type="ChEBI" id="CHEBI:57783"/>
        <dbReference type="ChEBI" id="CHEBI:58349"/>
        <dbReference type="EC" id="1.8.1.2"/>
    </reaction>
</comment>
<comment type="cofactor">
    <cofactor evidence="1">
        <name>FAD</name>
        <dbReference type="ChEBI" id="CHEBI:57692"/>
    </cofactor>
    <text evidence="1">Binds 1 FAD per subunit.</text>
</comment>
<comment type="cofactor">
    <cofactor evidence="1">
        <name>FMN</name>
        <dbReference type="ChEBI" id="CHEBI:58210"/>
    </cofactor>
    <text evidence="1">Binds 1 FMN per subunit.</text>
</comment>
<comment type="pathway">
    <text evidence="1">Sulfur metabolism; hydrogen sulfide biosynthesis; hydrogen sulfide from sulfite (NADPH route): step 1/1.</text>
</comment>
<comment type="subunit">
    <text evidence="1">Alpha(8)-beta(8). The alpha component is a flavoprotein, the beta component is a hemoprotein.</text>
</comment>
<comment type="similarity">
    <text evidence="1">Belongs to the NADPH-dependent sulphite reductase flavoprotein subunit CysJ family.</text>
</comment>
<comment type="similarity">
    <text evidence="1">In the N-terminal section; belongs to the flavodoxin family.</text>
</comment>
<comment type="similarity">
    <text evidence="1">In the C-terminal section; belongs to the flavoprotein pyridine nucleotide cytochrome reductase family.</text>
</comment>